<accession>Q8NCW0</accession>
<accession>B4DXF6</accession>
<accession>I3L2S2</accession>
<accession>Q8N2J4</accession>
<accession>Q8NCW1</accession>
<accession>Q96GL8</accession>
<accession>Q9BTP9</accession>
<comment type="function">
    <text evidence="2">Receptor for Dickkopf proteins. Cooperates with DKK1/2 to inhibit Wnt/beta-catenin signaling by promoting the endocytosis of Wnt receptors LRP5 and LRP6. Plays a role in limb development; attenuates Wnt signaling in the developing limb to allow normal limb patterning and can also negatively regulate bone formation.</text>
</comment>
<comment type="subunit">
    <text evidence="2">Interacts with ERLEC1. Forms a ternary complex with DKK1 and LRP6.</text>
</comment>
<comment type="subcellular location">
    <subcellularLocation>
        <location evidence="10">Membrane</location>
        <topology evidence="10">Single-pass type I membrane protein</topology>
    </subcellularLocation>
</comment>
<comment type="alternative products">
    <event type="alternative splicing"/>
    <isoform>
        <id>Q8NCW0-1</id>
        <name evidence="10">1</name>
        <sequence type="displayed"/>
    </isoform>
    <isoform>
        <id>Q8NCW0-2</id>
        <name evidence="10">2</name>
        <name>Kremen2a</name>
        <sequence type="described" ref="VSP_050509 VSP_050510"/>
    </isoform>
    <isoform>
        <id>Q8NCW0-3</id>
        <name evidence="10">3</name>
        <name>Kremen2b</name>
        <sequence type="described" ref="VSP_050511 VSP_050512"/>
    </isoform>
    <isoform>
        <id>Q8NCW0-4</id>
        <name evidence="10">4</name>
        <name>Kremen2c</name>
        <sequence type="described" ref="VSP_050513 VSP_050514"/>
    </isoform>
    <isoform>
        <id>Q8NCW0-5</id>
        <name>5</name>
        <sequence type="described" ref="VSP_046399"/>
    </isoform>
    <isoform>
        <id>Q8NCW0-6</id>
        <name>6</name>
        <sequence type="described" ref="VSP_046399 VSP_047386"/>
    </isoform>
</comment>
<comment type="domain">
    <text evidence="2">Binding to ERLEC1 is mediated by the oligosaccharides linked to the kringle domain.</text>
</comment>
<feature type="signal peptide" evidence="3">
    <location>
        <begin position="1"/>
        <end position="25"/>
    </location>
</feature>
<feature type="chain" id="PRO_0000021568" description="Kremen protein 2">
    <location>
        <begin position="26"/>
        <end position="462"/>
    </location>
</feature>
<feature type="topological domain" description="Extracellular" evidence="3">
    <location>
        <begin position="26"/>
        <end position="364"/>
    </location>
</feature>
<feature type="transmembrane region" description="Helical" evidence="3">
    <location>
        <begin position="365"/>
        <end position="387"/>
    </location>
</feature>
<feature type="topological domain" description="Cytoplasmic" evidence="3">
    <location>
        <begin position="388"/>
        <end position="462"/>
    </location>
</feature>
<feature type="domain" description="Kringle" evidence="5">
    <location>
        <begin position="35"/>
        <end position="119"/>
    </location>
</feature>
<feature type="domain" description="WSC" evidence="6 10">
    <location>
        <begin position="121"/>
        <end position="215"/>
    </location>
</feature>
<feature type="domain" description="CUB" evidence="4 10">
    <location>
        <begin position="219"/>
        <end position="326"/>
    </location>
</feature>
<feature type="region of interest" description="Disordered" evidence="7">
    <location>
        <begin position="328"/>
        <end position="352"/>
    </location>
</feature>
<feature type="glycosylation site" description="N-linked (GlcNAc...) asparagine" evidence="3">
    <location>
        <position position="49"/>
    </location>
</feature>
<feature type="glycosylation site" description="N-linked (GlcNAc...) asparagine" evidence="3">
    <location>
        <position position="222"/>
    </location>
</feature>
<feature type="glycosylation site" description="N-linked (GlcNAc...) asparagine" evidence="3">
    <location>
        <position position="244"/>
    </location>
</feature>
<feature type="glycosylation site" description="N-linked (GlcNAc...) asparagine" evidence="3">
    <location>
        <position position="351"/>
    </location>
</feature>
<feature type="disulfide bond" evidence="1">
    <location>
        <begin position="36"/>
        <end position="119"/>
    </location>
</feature>
<feature type="disulfide bond" evidence="1">
    <location>
        <begin position="60"/>
        <end position="100"/>
    </location>
</feature>
<feature type="disulfide bond" evidence="1">
    <location>
        <begin position="89"/>
        <end position="114"/>
    </location>
</feature>
<feature type="disulfide bond" evidence="1">
    <location>
        <begin position="219"/>
        <end position="245"/>
    </location>
</feature>
<feature type="splice variant" id="VSP_046399" description="In isoform 5 and isoform 6." evidence="8">
    <location>
        <begin position="162"/>
        <end position="200"/>
    </location>
</feature>
<feature type="splice variant" id="VSP_047386" description="In isoform 6." evidence="10">
    <original>ARVFSTVTAVSVLLLLLLGLLRPLRRRSCLLAPGKGPPALGASRGPRRSWAVWYQQPRGVALPCSPGDPQAEGSAAGYRPLSASSQSSLRSLISAL</original>
    <variation>GAVCWLREKGPRRWGLPGAPGEAGLCGTNSPEGWPCPAPPGTPRLRVLPRATGL</variation>
    <location>
        <begin position="367"/>
        <end position="462"/>
    </location>
</feature>
<feature type="splice variant" id="VSP_050511" description="In isoform 3." evidence="8 9">
    <original>ARVFSTVTAVSVLLLLLLGLLRPLRRRSCLLAPGKGPPALGASRGPRRSWAVWY</original>
    <variation>GAVCWLREKGPRRWGLPGAPGEAGLCGTNSPEGWPCPAPPGTPRLRVLPRATGL</variation>
    <location>
        <begin position="367"/>
        <end position="420"/>
    </location>
</feature>
<feature type="splice variant" id="VSP_050513" description="In isoform 4." evidence="8 9">
    <original>ARVFSTVTAVSVLLLLLLGLLRPLRRRSCLLAP</original>
    <variation>GEAGARDGSESGSRPLAPILTAAVCPQPGSSRR</variation>
    <location>
        <begin position="367"/>
        <end position="399"/>
    </location>
</feature>
<feature type="splice variant" id="VSP_050509" description="In isoform 2." evidence="10">
    <original>SCLLAPGKGPPALGASRGPRRSWAVWYQQPR</original>
    <variation>CGALGQGLRADRWWGAGAPEGNRARKELLGS</variation>
    <location>
        <begin position="394"/>
        <end position="424"/>
    </location>
</feature>
<feature type="splice variant" id="VSP_050514" description="In isoform 4." evidence="8 9">
    <location>
        <begin position="400"/>
        <end position="462"/>
    </location>
</feature>
<feature type="splice variant" id="VSP_050512" description="In isoform 3." evidence="8 9">
    <location>
        <begin position="421"/>
        <end position="462"/>
    </location>
</feature>
<feature type="splice variant" id="VSP_050510" description="In isoform 2." evidence="10">
    <location>
        <begin position="425"/>
        <end position="462"/>
    </location>
</feature>
<feature type="sequence variant" id="VAR_059691" description="In dbSNP:rs11866302.">
    <original>A</original>
    <variation>P</variation>
    <location>
        <position position="408"/>
    </location>
</feature>
<feature type="sequence conflict" description="In Ref. 2; BAC11365." evidence="10" ref="2">
    <location>
        <begin position="164"/>
        <end position="202"/>
    </location>
</feature>
<feature type="sequence conflict" description="In Ref. 2; BAC11365." evidence="10" ref="2">
    <original>A</original>
    <variation>D</variation>
    <location>
        <position position="285"/>
    </location>
</feature>
<reference evidence="10" key="1">
    <citation type="submission" date="2002-06" db="EMBL/GenBank/DDBJ databases">
        <title>Human Kremen2 and Wnt signaling.</title>
        <authorList>
            <person name="Tanaka S."/>
            <person name="Sugimachi K."/>
        </authorList>
    </citation>
    <scope>NUCLEOTIDE SEQUENCE [MRNA]</scope>
    <scope>ALTERNATIVE SPLICING</scope>
</reference>
<reference key="2">
    <citation type="journal article" date="2004" name="Nat. Genet.">
        <title>Complete sequencing and characterization of 21,243 full-length human cDNAs.</title>
        <authorList>
            <person name="Ota T."/>
            <person name="Suzuki Y."/>
            <person name="Nishikawa T."/>
            <person name="Otsuki T."/>
            <person name="Sugiyama T."/>
            <person name="Irie R."/>
            <person name="Wakamatsu A."/>
            <person name="Hayashi K."/>
            <person name="Sato H."/>
            <person name="Nagai K."/>
            <person name="Kimura K."/>
            <person name="Makita H."/>
            <person name="Sekine M."/>
            <person name="Obayashi M."/>
            <person name="Nishi T."/>
            <person name="Shibahara T."/>
            <person name="Tanaka T."/>
            <person name="Ishii S."/>
            <person name="Yamamoto J."/>
            <person name="Saito K."/>
            <person name="Kawai Y."/>
            <person name="Isono Y."/>
            <person name="Nakamura Y."/>
            <person name="Nagahari K."/>
            <person name="Murakami K."/>
            <person name="Yasuda T."/>
            <person name="Iwayanagi T."/>
            <person name="Wagatsuma M."/>
            <person name="Shiratori A."/>
            <person name="Sudo H."/>
            <person name="Hosoiri T."/>
            <person name="Kaku Y."/>
            <person name="Kodaira H."/>
            <person name="Kondo H."/>
            <person name="Sugawara M."/>
            <person name="Takahashi M."/>
            <person name="Kanda K."/>
            <person name="Yokoi T."/>
            <person name="Furuya T."/>
            <person name="Kikkawa E."/>
            <person name="Omura Y."/>
            <person name="Abe K."/>
            <person name="Kamihara K."/>
            <person name="Katsuta N."/>
            <person name="Sato K."/>
            <person name="Tanikawa M."/>
            <person name="Yamazaki M."/>
            <person name="Ninomiya K."/>
            <person name="Ishibashi T."/>
            <person name="Yamashita H."/>
            <person name="Murakawa K."/>
            <person name="Fujimori K."/>
            <person name="Tanai H."/>
            <person name="Kimata M."/>
            <person name="Watanabe M."/>
            <person name="Hiraoka S."/>
            <person name="Chiba Y."/>
            <person name="Ishida S."/>
            <person name="Ono Y."/>
            <person name="Takiguchi S."/>
            <person name="Watanabe S."/>
            <person name="Yosida M."/>
            <person name="Hotuta T."/>
            <person name="Kusano J."/>
            <person name="Kanehori K."/>
            <person name="Takahashi-Fujii A."/>
            <person name="Hara H."/>
            <person name="Tanase T.-O."/>
            <person name="Nomura Y."/>
            <person name="Togiya S."/>
            <person name="Komai F."/>
            <person name="Hara R."/>
            <person name="Takeuchi K."/>
            <person name="Arita M."/>
            <person name="Imose N."/>
            <person name="Musashino K."/>
            <person name="Yuuki H."/>
            <person name="Oshima A."/>
            <person name="Sasaki N."/>
            <person name="Aotsuka S."/>
            <person name="Yoshikawa Y."/>
            <person name="Matsunawa H."/>
            <person name="Ichihara T."/>
            <person name="Shiohata N."/>
            <person name="Sano S."/>
            <person name="Moriya S."/>
            <person name="Momiyama H."/>
            <person name="Satoh N."/>
            <person name="Takami S."/>
            <person name="Terashima Y."/>
            <person name="Suzuki O."/>
            <person name="Nakagawa S."/>
            <person name="Senoh A."/>
            <person name="Mizoguchi H."/>
            <person name="Goto Y."/>
            <person name="Shimizu F."/>
            <person name="Wakebe H."/>
            <person name="Hishigaki H."/>
            <person name="Watanabe T."/>
            <person name="Sugiyama A."/>
            <person name="Takemoto M."/>
            <person name="Kawakami B."/>
            <person name="Yamazaki M."/>
            <person name="Watanabe K."/>
            <person name="Kumagai A."/>
            <person name="Itakura S."/>
            <person name="Fukuzumi Y."/>
            <person name="Fujimori Y."/>
            <person name="Komiyama M."/>
            <person name="Tashiro H."/>
            <person name="Tanigami A."/>
            <person name="Fujiwara T."/>
            <person name="Ono T."/>
            <person name="Yamada K."/>
            <person name="Fujii Y."/>
            <person name="Ozaki K."/>
            <person name="Hirao M."/>
            <person name="Ohmori Y."/>
            <person name="Kawabata A."/>
            <person name="Hikiji T."/>
            <person name="Kobatake N."/>
            <person name="Inagaki H."/>
            <person name="Ikema Y."/>
            <person name="Okamoto S."/>
            <person name="Okitani R."/>
            <person name="Kawakami T."/>
            <person name="Noguchi S."/>
            <person name="Itoh T."/>
            <person name="Shigeta K."/>
            <person name="Senba T."/>
            <person name="Matsumura K."/>
            <person name="Nakajima Y."/>
            <person name="Mizuno T."/>
            <person name="Morinaga M."/>
            <person name="Sasaki M."/>
            <person name="Togashi T."/>
            <person name="Oyama M."/>
            <person name="Hata H."/>
            <person name="Watanabe M."/>
            <person name="Komatsu T."/>
            <person name="Mizushima-Sugano J."/>
            <person name="Satoh T."/>
            <person name="Shirai Y."/>
            <person name="Takahashi Y."/>
            <person name="Nakagawa K."/>
            <person name="Okumura K."/>
            <person name="Nagase T."/>
            <person name="Nomura N."/>
            <person name="Kikuchi H."/>
            <person name="Masuho Y."/>
            <person name="Yamashita R."/>
            <person name="Nakai K."/>
            <person name="Yada T."/>
            <person name="Nakamura Y."/>
            <person name="Ohara O."/>
            <person name="Isogai T."/>
            <person name="Sugano S."/>
        </authorList>
    </citation>
    <scope>NUCLEOTIDE SEQUENCE [LARGE SCALE MRNA] (ISOFORMS 3; 4 AND 5)</scope>
    <source>
        <tissue>Ovarian carcinoma</tissue>
        <tissue>Testis</tissue>
    </source>
</reference>
<reference key="3">
    <citation type="journal article" date="2004" name="Nature">
        <title>The sequence and analysis of duplication-rich human chromosome 16.</title>
        <authorList>
            <person name="Martin J."/>
            <person name="Han C."/>
            <person name="Gordon L.A."/>
            <person name="Terry A."/>
            <person name="Prabhakar S."/>
            <person name="She X."/>
            <person name="Xie G."/>
            <person name="Hellsten U."/>
            <person name="Chan Y.M."/>
            <person name="Altherr M."/>
            <person name="Couronne O."/>
            <person name="Aerts A."/>
            <person name="Bajorek E."/>
            <person name="Black S."/>
            <person name="Blumer H."/>
            <person name="Branscomb E."/>
            <person name="Brown N.C."/>
            <person name="Bruno W.J."/>
            <person name="Buckingham J.M."/>
            <person name="Callen D.F."/>
            <person name="Campbell C.S."/>
            <person name="Campbell M.L."/>
            <person name="Campbell E.W."/>
            <person name="Caoile C."/>
            <person name="Challacombe J.F."/>
            <person name="Chasteen L.A."/>
            <person name="Chertkov O."/>
            <person name="Chi H.C."/>
            <person name="Christensen M."/>
            <person name="Clark L.M."/>
            <person name="Cohn J.D."/>
            <person name="Denys M."/>
            <person name="Detter J.C."/>
            <person name="Dickson M."/>
            <person name="Dimitrijevic-Bussod M."/>
            <person name="Escobar J."/>
            <person name="Fawcett J.J."/>
            <person name="Flowers D."/>
            <person name="Fotopulos D."/>
            <person name="Glavina T."/>
            <person name="Gomez M."/>
            <person name="Gonzales E."/>
            <person name="Goodstein D."/>
            <person name="Goodwin L.A."/>
            <person name="Grady D.L."/>
            <person name="Grigoriev I."/>
            <person name="Groza M."/>
            <person name="Hammon N."/>
            <person name="Hawkins T."/>
            <person name="Haydu L."/>
            <person name="Hildebrand C.E."/>
            <person name="Huang W."/>
            <person name="Israni S."/>
            <person name="Jett J."/>
            <person name="Jewett P.B."/>
            <person name="Kadner K."/>
            <person name="Kimball H."/>
            <person name="Kobayashi A."/>
            <person name="Krawczyk M.-C."/>
            <person name="Leyba T."/>
            <person name="Longmire J.L."/>
            <person name="Lopez F."/>
            <person name="Lou Y."/>
            <person name="Lowry S."/>
            <person name="Ludeman T."/>
            <person name="Manohar C.F."/>
            <person name="Mark G.A."/>
            <person name="McMurray K.L."/>
            <person name="Meincke L.J."/>
            <person name="Morgan J."/>
            <person name="Moyzis R.K."/>
            <person name="Mundt M.O."/>
            <person name="Munk A.C."/>
            <person name="Nandkeshwar R.D."/>
            <person name="Pitluck S."/>
            <person name="Pollard M."/>
            <person name="Predki P."/>
            <person name="Parson-Quintana B."/>
            <person name="Ramirez L."/>
            <person name="Rash S."/>
            <person name="Retterer J."/>
            <person name="Ricke D.O."/>
            <person name="Robinson D.L."/>
            <person name="Rodriguez A."/>
            <person name="Salamov A."/>
            <person name="Saunders E.H."/>
            <person name="Scott D."/>
            <person name="Shough T."/>
            <person name="Stallings R.L."/>
            <person name="Stalvey M."/>
            <person name="Sutherland R.D."/>
            <person name="Tapia R."/>
            <person name="Tesmer J.G."/>
            <person name="Thayer N."/>
            <person name="Thompson L.S."/>
            <person name="Tice H."/>
            <person name="Torney D.C."/>
            <person name="Tran-Gyamfi M."/>
            <person name="Tsai M."/>
            <person name="Ulanovsky L.E."/>
            <person name="Ustaszewska A."/>
            <person name="Vo N."/>
            <person name="White P.S."/>
            <person name="Williams A.L."/>
            <person name="Wills P.L."/>
            <person name="Wu J.-R."/>
            <person name="Wu K."/>
            <person name="Yang J."/>
            <person name="DeJong P."/>
            <person name="Bruce D."/>
            <person name="Doggett N.A."/>
            <person name="Deaven L."/>
            <person name="Schmutz J."/>
            <person name="Grimwood J."/>
            <person name="Richardson P."/>
            <person name="Rokhsar D.S."/>
            <person name="Eichler E.E."/>
            <person name="Gilna P."/>
            <person name="Lucas S.M."/>
            <person name="Myers R.M."/>
            <person name="Rubin E.M."/>
            <person name="Pennacchio L.A."/>
        </authorList>
    </citation>
    <scope>NUCLEOTIDE SEQUENCE [LARGE SCALE GENOMIC DNA]</scope>
</reference>
<reference evidence="10" key="4">
    <citation type="submission" date="2005-09" db="EMBL/GenBank/DDBJ databases">
        <authorList>
            <person name="Mural R.J."/>
            <person name="Istrail S."/>
            <person name="Sutton G.G."/>
            <person name="Florea L."/>
            <person name="Halpern A.L."/>
            <person name="Mobarry C.M."/>
            <person name="Lippert R."/>
            <person name="Walenz B."/>
            <person name="Shatkay H."/>
            <person name="Dew I."/>
            <person name="Miller J.R."/>
            <person name="Flanigan M.J."/>
            <person name="Edwards N.J."/>
            <person name="Bolanos R."/>
            <person name="Fasulo D."/>
            <person name="Halldorsson B.V."/>
            <person name="Hannenhalli S."/>
            <person name="Turner R."/>
            <person name="Yooseph S."/>
            <person name="Lu F."/>
            <person name="Nusskern D.R."/>
            <person name="Shue B.C."/>
            <person name="Zheng X.H."/>
            <person name="Zhong F."/>
            <person name="Delcher A.L."/>
            <person name="Huson D.H."/>
            <person name="Kravitz S.A."/>
            <person name="Mouchard L."/>
            <person name="Reinert K."/>
            <person name="Remington K.A."/>
            <person name="Clark A.G."/>
            <person name="Waterman M.S."/>
            <person name="Eichler E.E."/>
            <person name="Adams M.D."/>
            <person name="Hunkapiller M.W."/>
            <person name="Myers E.W."/>
            <person name="Venter J.C."/>
        </authorList>
    </citation>
    <scope>NUCLEOTIDE SEQUENCE [LARGE SCALE GENOMIC DNA]</scope>
</reference>
<reference evidence="10" key="5">
    <citation type="journal article" date="2004" name="Genome Res.">
        <title>The status, quality, and expansion of the NIH full-length cDNA project: the Mammalian Gene Collection (MGC).</title>
        <authorList>
            <consortium name="The MGC Project Team"/>
        </authorList>
    </citation>
    <scope>NUCLEOTIDE SEQUENCE [LARGE SCALE MRNA] (ISOFORMS 3 AND 4)</scope>
    <source>
        <tissue>Brain</tissue>
        <tissue>Uterus</tissue>
    </source>
</reference>
<proteinExistence type="evidence at protein level"/>
<dbReference type="EMBL" id="AB086405">
    <property type="protein sequence ID" value="BAC00872.1"/>
    <property type="molecule type" value="mRNA"/>
</dbReference>
<dbReference type="EMBL" id="AB086355">
    <property type="protein sequence ID" value="BAC00823.1"/>
    <property type="molecule type" value="mRNA"/>
</dbReference>
<dbReference type="EMBL" id="AB086356">
    <property type="protein sequence ID" value="BAC00824.1"/>
    <property type="molecule type" value="mRNA"/>
</dbReference>
<dbReference type="EMBL" id="AB086357">
    <property type="protein sequence ID" value="BAC00825.1"/>
    <property type="molecule type" value="mRNA"/>
</dbReference>
<dbReference type="EMBL" id="AK027669">
    <property type="protein sequence ID" value="BAB55281.1"/>
    <property type="molecule type" value="mRNA"/>
</dbReference>
<dbReference type="EMBL" id="AK075033">
    <property type="protein sequence ID" value="BAC11365.1"/>
    <property type="molecule type" value="mRNA"/>
</dbReference>
<dbReference type="EMBL" id="AK301953">
    <property type="protein sequence ID" value="BAG63368.1"/>
    <property type="molecule type" value="mRNA"/>
</dbReference>
<dbReference type="EMBL" id="AC004235">
    <property type="status" value="NOT_ANNOTATED_CDS"/>
    <property type="molecule type" value="Genomic_DNA"/>
</dbReference>
<dbReference type="EMBL" id="CH471112">
    <property type="protein sequence ID" value="EAW85449.1"/>
    <property type="molecule type" value="Genomic_DNA"/>
</dbReference>
<dbReference type="EMBL" id="BC003533">
    <property type="protein sequence ID" value="AAH03533.1"/>
    <property type="molecule type" value="mRNA"/>
</dbReference>
<dbReference type="EMBL" id="BC009383">
    <property type="protein sequence ID" value="AAH09383.1"/>
    <property type="molecule type" value="mRNA"/>
</dbReference>
<dbReference type="CCDS" id="CCDS10483.1">
    <molecule id="Q8NCW0-1"/>
</dbReference>
<dbReference type="CCDS" id="CCDS10484.1">
    <molecule id="Q8NCW0-3"/>
</dbReference>
<dbReference type="CCDS" id="CCDS58412.1">
    <molecule id="Q8NCW0-5"/>
</dbReference>
<dbReference type="CCDS" id="CCDS58413.1">
    <molecule id="Q8NCW0-6"/>
</dbReference>
<dbReference type="RefSeq" id="NP_001240654.1">
    <molecule id="Q8NCW0-6"/>
    <property type="nucleotide sequence ID" value="NM_001253725.2"/>
</dbReference>
<dbReference type="RefSeq" id="NP_001240655.1">
    <molecule id="Q8NCW0-5"/>
    <property type="nucleotide sequence ID" value="NM_001253726.2"/>
</dbReference>
<dbReference type="RefSeq" id="NP_078783.1">
    <molecule id="Q8NCW0-3"/>
    <property type="nucleotide sequence ID" value="NM_024507.4"/>
</dbReference>
<dbReference type="RefSeq" id="NP_757384.1">
    <molecule id="Q8NCW0-1"/>
    <property type="nucleotide sequence ID" value="NM_172229.3"/>
</dbReference>
<dbReference type="SMR" id="Q8NCW0"/>
<dbReference type="BioGRID" id="122662">
    <property type="interactions" value="32"/>
</dbReference>
<dbReference type="FunCoup" id="Q8NCW0">
    <property type="interactions" value="98"/>
</dbReference>
<dbReference type="IntAct" id="Q8NCW0">
    <property type="interactions" value="22"/>
</dbReference>
<dbReference type="STRING" id="9606.ENSP00000304422"/>
<dbReference type="GlyCosmos" id="Q8NCW0">
    <property type="glycosylation" value="4 sites, No reported glycans"/>
</dbReference>
<dbReference type="GlyGen" id="Q8NCW0">
    <property type="glycosylation" value="5 sites, 1 N-linked glycan (1 site)"/>
</dbReference>
<dbReference type="iPTMnet" id="Q8NCW0"/>
<dbReference type="PhosphoSitePlus" id="Q8NCW0"/>
<dbReference type="BioMuta" id="KREMEN2"/>
<dbReference type="DMDM" id="30173086"/>
<dbReference type="jPOST" id="Q8NCW0"/>
<dbReference type="MassIVE" id="Q8NCW0"/>
<dbReference type="PaxDb" id="9606-ENSP00000304422"/>
<dbReference type="PeptideAtlas" id="Q8NCW0"/>
<dbReference type="ProteomicsDB" id="47024"/>
<dbReference type="ProteomicsDB" id="5431"/>
<dbReference type="ProteomicsDB" id="72953">
    <molecule id="Q8NCW0-1"/>
</dbReference>
<dbReference type="ProteomicsDB" id="72954">
    <molecule id="Q8NCW0-2"/>
</dbReference>
<dbReference type="ProteomicsDB" id="72955">
    <molecule id="Q8NCW0-3"/>
</dbReference>
<dbReference type="ProteomicsDB" id="72956">
    <molecule id="Q8NCW0-4"/>
</dbReference>
<dbReference type="Antibodypedia" id="1159">
    <property type="antibodies" value="122 antibodies from 28 providers"/>
</dbReference>
<dbReference type="DNASU" id="79412"/>
<dbReference type="Ensembl" id="ENST00000303746.10">
    <molecule id="Q8NCW0-1"/>
    <property type="protein sequence ID" value="ENSP00000304422.5"/>
    <property type="gene ID" value="ENSG00000131650.15"/>
</dbReference>
<dbReference type="Ensembl" id="ENST00000319500.11">
    <molecule id="Q8NCW0-3"/>
    <property type="protein sequence ID" value="ENSP00000322079.6"/>
    <property type="gene ID" value="ENSG00000131650.15"/>
</dbReference>
<dbReference type="Ensembl" id="ENST00000571007.5">
    <molecule id="Q8NCW0-5"/>
    <property type="protein sequence ID" value="ENSP00000461860.1"/>
    <property type="gene ID" value="ENSG00000131650.15"/>
</dbReference>
<dbReference type="Ensembl" id="ENST00000572045.5">
    <molecule id="Q8NCW0-4"/>
    <property type="protein sequence ID" value="ENSP00000460578.1"/>
    <property type="gene ID" value="ENSG00000131650.15"/>
</dbReference>
<dbReference type="Ensembl" id="ENST00000575769.1">
    <molecule id="Q8NCW0-2"/>
    <property type="protein sequence ID" value="ENSP00000460917.1"/>
    <property type="gene ID" value="ENSG00000131650.15"/>
</dbReference>
<dbReference type="Ensembl" id="ENST00000575885.5">
    <molecule id="Q8NCW0-6"/>
    <property type="protein sequence ID" value="ENSP00000459878.1"/>
    <property type="gene ID" value="ENSG00000131650.15"/>
</dbReference>
<dbReference type="GeneID" id="79412"/>
<dbReference type="KEGG" id="hsa:79412"/>
<dbReference type="MANE-Select" id="ENST00000303746.10">
    <property type="protein sequence ID" value="ENSP00000304422.5"/>
    <property type="RefSeq nucleotide sequence ID" value="NM_172229.3"/>
    <property type="RefSeq protein sequence ID" value="NP_757384.1"/>
</dbReference>
<dbReference type="UCSC" id="uc002csg.4">
    <molecule id="Q8NCW0-1"/>
    <property type="organism name" value="human"/>
</dbReference>
<dbReference type="AGR" id="HGNC:18797"/>
<dbReference type="CTD" id="79412"/>
<dbReference type="DisGeNET" id="79412"/>
<dbReference type="GeneCards" id="KREMEN2"/>
<dbReference type="HGNC" id="HGNC:18797">
    <property type="gene designation" value="KREMEN2"/>
</dbReference>
<dbReference type="HPA" id="ENSG00000131650">
    <property type="expression patterns" value="Tissue enhanced (retina, skin)"/>
</dbReference>
<dbReference type="MIM" id="609899">
    <property type="type" value="gene"/>
</dbReference>
<dbReference type="neXtProt" id="NX_Q8NCW0"/>
<dbReference type="OpenTargets" id="ENSG00000131650"/>
<dbReference type="PharmGKB" id="PA38683"/>
<dbReference type="VEuPathDB" id="HostDB:ENSG00000131650"/>
<dbReference type="eggNOG" id="KOG4157">
    <property type="taxonomic scope" value="Eukaryota"/>
</dbReference>
<dbReference type="GeneTree" id="ENSGT00940000162126"/>
<dbReference type="HOGENOM" id="CLU_047976_0_0_1"/>
<dbReference type="InParanoid" id="Q8NCW0"/>
<dbReference type="OMA" id="RNCSWVV"/>
<dbReference type="OrthoDB" id="431034at2759"/>
<dbReference type="PAN-GO" id="Q8NCW0">
    <property type="GO annotations" value="2 GO annotations based on evolutionary models"/>
</dbReference>
<dbReference type="PhylomeDB" id="Q8NCW0"/>
<dbReference type="TreeFam" id="TF331319"/>
<dbReference type="PathwayCommons" id="Q8NCW0"/>
<dbReference type="Reactome" id="R-HSA-201681">
    <property type="pathway name" value="TCF dependent signaling in response to WNT"/>
</dbReference>
<dbReference type="Reactome" id="R-HSA-3772470">
    <property type="pathway name" value="Negative regulation of TCF-dependent signaling by WNT ligand antagonists"/>
</dbReference>
<dbReference type="Reactome" id="R-HSA-5339717">
    <property type="pathway name" value="Signaling by LRP5 mutants"/>
</dbReference>
<dbReference type="SignaLink" id="Q8NCW0"/>
<dbReference type="SIGNOR" id="Q8NCW0"/>
<dbReference type="BioGRID-ORCS" id="79412">
    <property type="hits" value="29 hits in 1158 CRISPR screens"/>
</dbReference>
<dbReference type="GenomeRNAi" id="79412"/>
<dbReference type="Pharos" id="Q8NCW0">
    <property type="development level" value="Tbio"/>
</dbReference>
<dbReference type="PRO" id="PR:Q8NCW0"/>
<dbReference type="Proteomes" id="UP000005640">
    <property type="component" value="Chromosome 16"/>
</dbReference>
<dbReference type="RNAct" id="Q8NCW0">
    <property type="molecule type" value="protein"/>
</dbReference>
<dbReference type="Bgee" id="ENSG00000131650">
    <property type="expression patterns" value="Expressed in skin of abdomen and 97 other cell types or tissues"/>
</dbReference>
<dbReference type="GO" id="GO:0031901">
    <property type="term" value="C:early endosome membrane"/>
    <property type="evidence" value="ECO:0000304"/>
    <property type="project" value="Reactome"/>
</dbReference>
<dbReference type="GO" id="GO:0005886">
    <property type="term" value="C:plasma membrane"/>
    <property type="evidence" value="ECO:0000318"/>
    <property type="project" value="GO_Central"/>
</dbReference>
<dbReference type="GO" id="GO:0004888">
    <property type="term" value="F:transmembrane signaling receptor activity"/>
    <property type="evidence" value="ECO:0000318"/>
    <property type="project" value="GO_Central"/>
</dbReference>
<dbReference type="GO" id="GO:0060173">
    <property type="term" value="P:limb development"/>
    <property type="evidence" value="ECO:0000250"/>
    <property type="project" value="UniProtKB"/>
</dbReference>
<dbReference type="GO" id="GO:0030279">
    <property type="term" value="P:negative regulation of ossification"/>
    <property type="evidence" value="ECO:0000250"/>
    <property type="project" value="UniProtKB"/>
</dbReference>
<dbReference type="GO" id="GO:0007165">
    <property type="term" value="P:signal transduction"/>
    <property type="evidence" value="ECO:0000318"/>
    <property type="project" value="GO_Central"/>
</dbReference>
<dbReference type="GO" id="GO:0016055">
    <property type="term" value="P:Wnt signaling pathway"/>
    <property type="evidence" value="ECO:0007669"/>
    <property type="project" value="UniProtKB-KW"/>
</dbReference>
<dbReference type="CDD" id="cd00041">
    <property type="entry name" value="CUB"/>
    <property type="match status" value="1"/>
</dbReference>
<dbReference type="CDD" id="cd00108">
    <property type="entry name" value="KR"/>
    <property type="match status" value="1"/>
</dbReference>
<dbReference type="FunFam" id="2.40.20.10:FF:000006">
    <property type="entry name" value="Kremen protein 2"/>
    <property type="match status" value="1"/>
</dbReference>
<dbReference type="FunFam" id="2.60.120.290:FF:000037">
    <property type="entry name" value="Kremen protein 2"/>
    <property type="match status" value="1"/>
</dbReference>
<dbReference type="Gene3D" id="2.40.20.10">
    <property type="entry name" value="Plasminogen Kringle 4"/>
    <property type="match status" value="1"/>
</dbReference>
<dbReference type="Gene3D" id="2.60.120.290">
    <property type="entry name" value="Spermadhesin, CUB domain"/>
    <property type="match status" value="1"/>
</dbReference>
<dbReference type="InterPro" id="IPR000859">
    <property type="entry name" value="CUB_dom"/>
</dbReference>
<dbReference type="InterPro" id="IPR017076">
    <property type="entry name" value="Kremen"/>
</dbReference>
<dbReference type="InterPro" id="IPR051836">
    <property type="entry name" value="Kremen_rcpt"/>
</dbReference>
<dbReference type="InterPro" id="IPR000001">
    <property type="entry name" value="Kringle"/>
</dbReference>
<dbReference type="InterPro" id="IPR013806">
    <property type="entry name" value="Kringle-like"/>
</dbReference>
<dbReference type="InterPro" id="IPR018056">
    <property type="entry name" value="Kringle_CS"/>
</dbReference>
<dbReference type="InterPro" id="IPR038178">
    <property type="entry name" value="Kringle_sf"/>
</dbReference>
<dbReference type="InterPro" id="IPR035914">
    <property type="entry name" value="Sperma_CUB_dom_sf"/>
</dbReference>
<dbReference type="InterPro" id="IPR002889">
    <property type="entry name" value="WSC_carb-bd"/>
</dbReference>
<dbReference type="PANTHER" id="PTHR24269">
    <property type="entry name" value="KREMEN PROTEIN"/>
    <property type="match status" value="1"/>
</dbReference>
<dbReference type="PANTHER" id="PTHR24269:SF15">
    <property type="entry name" value="KREMEN PROTEIN 2"/>
    <property type="match status" value="1"/>
</dbReference>
<dbReference type="Pfam" id="PF00431">
    <property type="entry name" value="CUB"/>
    <property type="match status" value="1"/>
</dbReference>
<dbReference type="Pfam" id="PF00051">
    <property type="entry name" value="Kringle"/>
    <property type="match status" value="1"/>
</dbReference>
<dbReference type="Pfam" id="PF01822">
    <property type="entry name" value="WSC"/>
    <property type="match status" value="1"/>
</dbReference>
<dbReference type="PIRSF" id="PIRSF036961">
    <property type="entry name" value="Kremen"/>
    <property type="match status" value="1"/>
</dbReference>
<dbReference type="PRINTS" id="PR00018">
    <property type="entry name" value="KRINGLE"/>
</dbReference>
<dbReference type="SMART" id="SM00042">
    <property type="entry name" value="CUB"/>
    <property type="match status" value="1"/>
</dbReference>
<dbReference type="SMART" id="SM00130">
    <property type="entry name" value="KR"/>
    <property type="match status" value="1"/>
</dbReference>
<dbReference type="SMART" id="SM00321">
    <property type="entry name" value="WSC"/>
    <property type="match status" value="1"/>
</dbReference>
<dbReference type="SUPFAM" id="SSF57440">
    <property type="entry name" value="Kringle-like"/>
    <property type="match status" value="1"/>
</dbReference>
<dbReference type="SUPFAM" id="SSF49854">
    <property type="entry name" value="Spermadhesin, CUB domain"/>
    <property type="match status" value="1"/>
</dbReference>
<dbReference type="PROSITE" id="PS01180">
    <property type="entry name" value="CUB"/>
    <property type="match status" value="1"/>
</dbReference>
<dbReference type="PROSITE" id="PS00021">
    <property type="entry name" value="KRINGLE_1"/>
    <property type="match status" value="1"/>
</dbReference>
<dbReference type="PROSITE" id="PS50070">
    <property type="entry name" value="KRINGLE_2"/>
    <property type="match status" value="1"/>
</dbReference>
<dbReference type="PROSITE" id="PS51212">
    <property type="entry name" value="WSC"/>
    <property type="match status" value="1"/>
</dbReference>
<protein>
    <recommendedName>
        <fullName>Kremen protein 2</fullName>
    </recommendedName>
    <alternativeName>
        <fullName>Dickkopf receptor 2</fullName>
    </alternativeName>
    <alternativeName>
        <fullName>Kringle domain-containing transmembrane protein 2</fullName>
    </alternativeName>
    <alternativeName>
        <fullName>Kringle-containing protein marking the eye and the nose</fullName>
    </alternativeName>
</protein>
<evidence type="ECO:0000250" key="1"/>
<evidence type="ECO:0000250" key="2">
    <source>
        <dbReference type="UniProtKB" id="Q8K1S7"/>
    </source>
</evidence>
<evidence type="ECO:0000255" key="3"/>
<evidence type="ECO:0000255" key="4">
    <source>
        <dbReference type="PROSITE-ProRule" id="PRU00059"/>
    </source>
</evidence>
<evidence type="ECO:0000255" key="5">
    <source>
        <dbReference type="PROSITE-ProRule" id="PRU00121"/>
    </source>
</evidence>
<evidence type="ECO:0000255" key="6">
    <source>
        <dbReference type="PROSITE-ProRule" id="PRU00558"/>
    </source>
</evidence>
<evidence type="ECO:0000256" key="7">
    <source>
        <dbReference type="SAM" id="MobiDB-lite"/>
    </source>
</evidence>
<evidence type="ECO:0000303" key="8">
    <source>
    </source>
</evidence>
<evidence type="ECO:0000303" key="9">
    <source>
    </source>
</evidence>
<evidence type="ECO:0000305" key="10"/>
<evidence type="ECO:0000312" key="11">
    <source>
        <dbReference type="EMBL" id="BAC00872.1"/>
    </source>
</evidence>
<organism evidence="11">
    <name type="scientific">Homo sapiens</name>
    <name type="common">Human</name>
    <dbReference type="NCBI Taxonomy" id="9606"/>
    <lineage>
        <taxon>Eukaryota</taxon>
        <taxon>Metazoa</taxon>
        <taxon>Chordata</taxon>
        <taxon>Craniata</taxon>
        <taxon>Vertebrata</taxon>
        <taxon>Euteleostomi</taxon>
        <taxon>Mammalia</taxon>
        <taxon>Eutheria</taxon>
        <taxon>Euarchontoglires</taxon>
        <taxon>Primates</taxon>
        <taxon>Haplorrhini</taxon>
        <taxon>Catarrhini</taxon>
        <taxon>Hominidae</taxon>
        <taxon>Homo</taxon>
    </lineage>
</organism>
<name>KREM2_HUMAN</name>
<keyword id="KW-0025">Alternative splicing</keyword>
<keyword id="KW-1015">Disulfide bond</keyword>
<keyword id="KW-0325">Glycoprotein</keyword>
<keyword id="KW-0420">Kringle</keyword>
<keyword id="KW-0472">Membrane</keyword>
<keyword id="KW-1267">Proteomics identification</keyword>
<keyword id="KW-1185">Reference proteome</keyword>
<keyword id="KW-0732">Signal</keyword>
<keyword id="KW-0812">Transmembrane</keyword>
<keyword id="KW-1133">Transmembrane helix</keyword>
<keyword id="KW-0879">Wnt signaling pathway</keyword>
<sequence>MGTQALQGFLFLLFLPLLQPRGASAGSLHSPGLSECFQVNGADYRGHQNRTGPRGAGRPCLFWDQTQQHSYSSASDPHGRWGLGAHNFCRNPDGDVQPWCYVAETEEGIYWRYCDIPSCHMPGYLGCFVDSGAPPALSGPSGTSTKLTVQVCLRFCRMKGYQLAGVEAGYACFCGSESDLARGRLAPATDCDQICFGHPGQLCGGDGRLGVYEVSVGSCQGNWTAPQGVIYSPDFPDEYGPDRNCSWALGPPGAALELTFRLFELADPRDRLELRDAASGSLLRAFDGARPPPSGPLRLGTAALLLTFRSDARGHAQGFALTYRGLQDAAEDPEAPEGSAQTPAAPLDGANVSCSPRPGAPPAAIGARVFSTVTAVSVLLLLLLGLLRPLRRRSCLLAPGKGPPALGASRGPRRSWAVWYQQPRGVALPCSPGDPQAEGSAAGYRPLSASSQSSLRSLISAL</sequence>
<gene>
    <name type="primary">KREMEN2</name>
    <name type="synonym">KRM2</name>
</gene>